<gene>
    <name evidence="1" type="primary">tatB</name>
    <name type="ordered locus">MAV_1367</name>
</gene>
<name>TATB_MYCA1</name>
<keyword id="KW-1003">Cell membrane</keyword>
<keyword id="KW-0472">Membrane</keyword>
<keyword id="KW-0653">Protein transport</keyword>
<keyword id="KW-0811">Translocation</keyword>
<keyword id="KW-0812">Transmembrane</keyword>
<keyword id="KW-1133">Transmembrane helix</keyword>
<keyword id="KW-0813">Transport</keyword>
<reference key="1">
    <citation type="submission" date="2006-10" db="EMBL/GenBank/DDBJ databases">
        <authorList>
            <person name="Fleischmann R.D."/>
            <person name="Dodson R.J."/>
            <person name="Haft D.H."/>
            <person name="Merkel J.S."/>
            <person name="Nelson W.C."/>
            <person name="Fraser C.M."/>
        </authorList>
    </citation>
    <scope>NUCLEOTIDE SEQUENCE [LARGE SCALE GENOMIC DNA]</scope>
    <source>
        <strain>104</strain>
    </source>
</reference>
<sequence length="131" mass="14152">MLGSLSWEHMLVLVVVGLVVLGPERLPGAIRWTSNALRQARDYLSGVTTQLREDLGPEFDDLRVPLSELQKLRGMTPRAALTKHLLDGDDSFLTGAFDRPVNGAAAQPPPAPAPPPEPHRPGQTPFDADAT</sequence>
<proteinExistence type="inferred from homology"/>
<feature type="chain" id="PRO_0000301185" description="Sec-independent protein translocase protein TatB">
    <location>
        <begin position="1"/>
        <end position="131"/>
    </location>
</feature>
<feature type="transmembrane region" description="Helical" evidence="1">
    <location>
        <begin position="2"/>
        <end position="22"/>
    </location>
</feature>
<feature type="region of interest" description="Disordered" evidence="2">
    <location>
        <begin position="96"/>
        <end position="131"/>
    </location>
</feature>
<feature type="compositionally biased region" description="Pro residues" evidence="2">
    <location>
        <begin position="107"/>
        <end position="116"/>
    </location>
</feature>
<protein>
    <recommendedName>
        <fullName evidence="1">Sec-independent protein translocase protein TatB</fullName>
    </recommendedName>
</protein>
<organism>
    <name type="scientific">Mycobacterium avium (strain 104)</name>
    <dbReference type="NCBI Taxonomy" id="243243"/>
    <lineage>
        <taxon>Bacteria</taxon>
        <taxon>Bacillati</taxon>
        <taxon>Actinomycetota</taxon>
        <taxon>Actinomycetes</taxon>
        <taxon>Mycobacteriales</taxon>
        <taxon>Mycobacteriaceae</taxon>
        <taxon>Mycobacterium</taxon>
        <taxon>Mycobacterium avium complex (MAC)</taxon>
    </lineage>
</organism>
<evidence type="ECO:0000255" key="1">
    <source>
        <dbReference type="HAMAP-Rule" id="MF_00237"/>
    </source>
</evidence>
<evidence type="ECO:0000256" key="2">
    <source>
        <dbReference type="SAM" id="MobiDB-lite"/>
    </source>
</evidence>
<dbReference type="EMBL" id="CP000479">
    <property type="protein sequence ID" value="ABK65056.1"/>
    <property type="molecule type" value="Genomic_DNA"/>
</dbReference>
<dbReference type="RefSeq" id="WP_011724092.1">
    <property type="nucleotide sequence ID" value="NC_008595.1"/>
</dbReference>
<dbReference type="SMR" id="A0QCH3"/>
<dbReference type="KEGG" id="mav:MAV_1367"/>
<dbReference type="HOGENOM" id="CLU_086034_2_0_11"/>
<dbReference type="Proteomes" id="UP000001574">
    <property type="component" value="Chromosome"/>
</dbReference>
<dbReference type="GO" id="GO:0033281">
    <property type="term" value="C:TAT protein transport complex"/>
    <property type="evidence" value="ECO:0007669"/>
    <property type="project" value="UniProtKB-UniRule"/>
</dbReference>
<dbReference type="GO" id="GO:0008320">
    <property type="term" value="F:protein transmembrane transporter activity"/>
    <property type="evidence" value="ECO:0007669"/>
    <property type="project" value="UniProtKB-UniRule"/>
</dbReference>
<dbReference type="GO" id="GO:0043953">
    <property type="term" value="P:protein transport by the Tat complex"/>
    <property type="evidence" value="ECO:0007669"/>
    <property type="project" value="UniProtKB-UniRule"/>
</dbReference>
<dbReference type="Gene3D" id="1.20.5.3310">
    <property type="match status" value="1"/>
</dbReference>
<dbReference type="HAMAP" id="MF_00237">
    <property type="entry name" value="TatB"/>
    <property type="match status" value="1"/>
</dbReference>
<dbReference type="InterPro" id="IPR003369">
    <property type="entry name" value="TatA/B/E"/>
</dbReference>
<dbReference type="InterPro" id="IPR018448">
    <property type="entry name" value="TatB"/>
</dbReference>
<dbReference type="NCBIfam" id="TIGR01410">
    <property type="entry name" value="tatB"/>
    <property type="match status" value="1"/>
</dbReference>
<dbReference type="Pfam" id="PF02416">
    <property type="entry name" value="TatA_B_E"/>
    <property type="match status" value="1"/>
</dbReference>
<dbReference type="PRINTS" id="PR01506">
    <property type="entry name" value="TATBPROTEIN"/>
</dbReference>
<comment type="function">
    <text evidence="1">Part of the twin-arginine translocation (Tat) system that transports large folded proteins containing a characteristic twin-arginine motif in their signal peptide across membranes. Together with TatC, TatB is part of a receptor directly interacting with Tat signal peptides. TatB may form an oligomeric binding site that transiently accommodates folded Tat precursor proteins before their translocation.</text>
</comment>
<comment type="subunit">
    <text evidence="1">The Tat system comprises two distinct complexes: a TatABC complex, containing multiple copies of TatA, TatB and TatC subunits, and a separate TatA complex, containing only TatA subunits. Substrates initially bind to the TatABC complex, which probably triggers association of the separate TatA complex to form the active translocon.</text>
</comment>
<comment type="subcellular location">
    <subcellularLocation>
        <location evidence="1">Cell membrane</location>
        <topology evidence="1">Single-pass membrane protein</topology>
    </subcellularLocation>
</comment>
<comment type="similarity">
    <text evidence="1">Belongs to the TatB family.</text>
</comment>
<accession>A0QCH3</accession>